<organism>
    <name type="scientific">Ichthyothere terminalis</name>
    <dbReference type="NCBI Taxonomy" id="185166"/>
    <lineage>
        <taxon>Eukaryota</taxon>
        <taxon>Viridiplantae</taxon>
        <taxon>Streptophyta</taxon>
        <taxon>Embryophyta</taxon>
        <taxon>Tracheophyta</taxon>
        <taxon>Spermatophyta</taxon>
        <taxon>Magnoliopsida</taxon>
        <taxon>eudicotyledons</taxon>
        <taxon>Gunneridae</taxon>
        <taxon>Pentapetalae</taxon>
        <taxon>asterids</taxon>
        <taxon>campanulids</taxon>
        <taxon>Asterales</taxon>
        <taxon>Asteraceae</taxon>
        <taxon>Asteroideae</taxon>
        <taxon>Heliantheae alliance</taxon>
        <taxon>Millerieae</taxon>
        <taxon>Ichthyothere</taxon>
    </lineage>
</organism>
<sequence>MFPMVTEFMNYGQQTVRAARYIGQGFMITLSHANRLPVTIQYPYEKLITSERFRGRIHFEFDKCIACEVCVRVCPIDLPVVDWKLETDIRKKRLLNYSIDFGICIFCGNCVEYCPTNCLSMTEEYELSTYDRHELNYNQIALGRLPMSIIDDYTIRTILNLPEIKT</sequence>
<dbReference type="EC" id="7.1.1.-" evidence="1"/>
<dbReference type="EMBL" id="AF383801">
    <property type="protein sequence ID" value="AAN61742.1"/>
    <property type="molecule type" value="Genomic_DNA"/>
</dbReference>
<dbReference type="SMR" id="Q8HVR2"/>
<dbReference type="GO" id="GO:0009535">
    <property type="term" value="C:chloroplast thylakoid membrane"/>
    <property type="evidence" value="ECO:0007669"/>
    <property type="project" value="UniProtKB-SubCell"/>
</dbReference>
<dbReference type="GO" id="GO:0051539">
    <property type="term" value="F:4 iron, 4 sulfur cluster binding"/>
    <property type="evidence" value="ECO:0007669"/>
    <property type="project" value="UniProtKB-KW"/>
</dbReference>
<dbReference type="GO" id="GO:0005506">
    <property type="term" value="F:iron ion binding"/>
    <property type="evidence" value="ECO:0007669"/>
    <property type="project" value="UniProtKB-UniRule"/>
</dbReference>
<dbReference type="GO" id="GO:0008137">
    <property type="term" value="F:NADH dehydrogenase (ubiquinone) activity"/>
    <property type="evidence" value="ECO:0007669"/>
    <property type="project" value="InterPro"/>
</dbReference>
<dbReference type="GO" id="GO:0048038">
    <property type="term" value="F:quinone binding"/>
    <property type="evidence" value="ECO:0007669"/>
    <property type="project" value="UniProtKB-KW"/>
</dbReference>
<dbReference type="GO" id="GO:0019684">
    <property type="term" value="P:photosynthesis, light reaction"/>
    <property type="evidence" value="ECO:0007669"/>
    <property type="project" value="UniProtKB-UniRule"/>
</dbReference>
<dbReference type="FunFam" id="3.30.70.3270:FF:000006">
    <property type="entry name" value="NAD(P)H-quinone oxidoreductase subunit I, chloroplastic"/>
    <property type="match status" value="1"/>
</dbReference>
<dbReference type="Gene3D" id="3.30.70.3270">
    <property type="match status" value="1"/>
</dbReference>
<dbReference type="HAMAP" id="MF_01351">
    <property type="entry name" value="NDH1_NuoI"/>
    <property type="match status" value="1"/>
</dbReference>
<dbReference type="InterPro" id="IPR017896">
    <property type="entry name" value="4Fe4S_Fe-S-bd"/>
</dbReference>
<dbReference type="InterPro" id="IPR017900">
    <property type="entry name" value="4Fe4S_Fe_S_CS"/>
</dbReference>
<dbReference type="InterPro" id="IPR010226">
    <property type="entry name" value="NADH_quinone_OxRdtase_chainI"/>
</dbReference>
<dbReference type="InterPro" id="IPR004497">
    <property type="entry name" value="NDHI"/>
</dbReference>
<dbReference type="NCBIfam" id="TIGR00403">
    <property type="entry name" value="ndhI"/>
    <property type="match status" value="1"/>
</dbReference>
<dbReference type="NCBIfam" id="TIGR01971">
    <property type="entry name" value="NuoI"/>
    <property type="match status" value="1"/>
</dbReference>
<dbReference type="NCBIfam" id="NF004537">
    <property type="entry name" value="PRK05888.1-3"/>
    <property type="match status" value="1"/>
</dbReference>
<dbReference type="PANTHER" id="PTHR47275">
    <property type="entry name" value="NAD(P)H-QUINONE OXIDOREDUCTASE SUBUNIT I, CHLOROPLASTIC"/>
    <property type="match status" value="1"/>
</dbReference>
<dbReference type="PANTHER" id="PTHR47275:SF1">
    <property type="entry name" value="NAD(P)H-QUINONE OXIDOREDUCTASE SUBUNIT I, CHLOROPLASTIC"/>
    <property type="match status" value="1"/>
</dbReference>
<dbReference type="Pfam" id="PF00037">
    <property type="entry name" value="Fer4"/>
    <property type="match status" value="2"/>
</dbReference>
<dbReference type="SUPFAM" id="SSF54862">
    <property type="entry name" value="4Fe-4S ferredoxins"/>
    <property type="match status" value="1"/>
</dbReference>
<dbReference type="PROSITE" id="PS00198">
    <property type="entry name" value="4FE4S_FER_1"/>
    <property type="match status" value="2"/>
</dbReference>
<dbReference type="PROSITE" id="PS51379">
    <property type="entry name" value="4FE4S_FER_2"/>
    <property type="match status" value="2"/>
</dbReference>
<protein>
    <recommendedName>
        <fullName evidence="1">NAD(P)H-quinone oxidoreductase subunit I, chloroplastic</fullName>
        <ecNumber evidence="1">7.1.1.-</ecNumber>
    </recommendedName>
    <alternativeName>
        <fullName evidence="1">NAD(P)H dehydrogenase subunit I</fullName>
        <shortName evidence="1">NDH subunit I</shortName>
    </alternativeName>
    <alternativeName>
        <fullName evidence="1">NADH-plastoquinone oxidoreductase subunit I</fullName>
    </alternativeName>
</protein>
<accession>Q8HVR2</accession>
<gene>
    <name evidence="1" type="primary">ndhI</name>
</gene>
<keyword id="KW-0004">4Fe-4S</keyword>
<keyword id="KW-0150">Chloroplast</keyword>
<keyword id="KW-0408">Iron</keyword>
<keyword id="KW-0411">Iron-sulfur</keyword>
<keyword id="KW-0472">Membrane</keyword>
<keyword id="KW-0479">Metal-binding</keyword>
<keyword id="KW-0520">NAD</keyword>
<keyword id="KW-0521">NADP</keyword>
<keyword id="KW-0934">Plastid</keyword>
<keyword id="KW-0618">Plastoquinone</keyword>
<keyword id="KW-0874">Quinone</keyword>
<keyword id="KW-0677">Repeat</keyword>
<keyword id="KW-0793">Thylakoid</keyword>
<keyword id="KW-1278">Translocase</keyword>
<geneLocation type="chloroplast"/>
<feature type="chain" id="PRO_0000250801" description="NAD(P)H-quinone oxidoreductase subunit I, chloroplastic">
    <location>
        <begin position="1"/>
        <end position="166"/>
    </location>
</feature>
<feature type="domain" description="4Fe-4S ferredoxin-type 1" evidence="1">
    <location>
        <begin position="55"/>
        <end position="84"/>
    </location>
</feature>
<feature type="domain" description="4Fe-4S ferredoxin-type 2" evidence="1">
    <location>
        <begin position="95"/>
        <end position="124"/>
    </location>
</feature>
<feature type="binding site" evidence="1">
    <location>
        <position position="64"/>
    </location>
    <ligand>
        <name>[4Fe-4S] cluster</name>
        <dbReference type="ChEBI" id="CHEBI:49883"/>
        <label>1</label>
    </ligand>
</feature>
<feature type="binding site" evidence="1">
    <location>
        <position position="67"/>
    </location>
    <ligand>
        <name>[4Fe-4S] cluster</name>
        <dbReference type="ChEBI" id="CHEBI:49883"/>
        <label>1</label>
    </ligand>
</feature>
<feature type="binding site" evidence="1">
    <location>
        <position position="70"/>
    </location>
    <ligand>
        <name>[4Fe-4S] cluster</name>
        <dbReference type="ChEBI" id="CHEBI:49883"/>
        <label>1</label>
    </ligand>
</feature>
<feature type="binding site" evidence="1">
    <location>
        <position position="74"/>
    </location>
    <ligand>
        <name>[4Fe-4S] cluster</name>
        <dbReference type="ChEBI" id="CHEBI:49883"/>
        <label>2</label>
    </ligand>
</feature>
<feature type="binding site" evidence="1">
    <location>
        <position position="104"/>
    </location>
    <ligand>
        <name>[4Fe-4S] cluster</name>
        <dbReference type="ChEBI" id="CHEBI:49883"/>
        <label>2</label>
    </ligand>
</feature>
<feature type="binding site" evidence="1">
    <location>
        <position position="107"/>
    </location>
    <ligand>
        <name>[4Fe-4S] cluster</name>
        <dbReference type="ChEBI" id="CHEBI:49883"/>
        <label>2</label>
    </ligand>
</feature>
<feature type="binding site" evidence="1">
    <location>
        <position position="110"/>
    </location>
    <ligand>
        <name>[4Fe-4S] cluster</name>
        <dbReference type="ChEBI" id="CHEBI:49883"/>
        <label>2</label>
    </ligand>
</feature>
<feature type="binding site" evidence="1">
    <location>
        <position position="114"/>
    </location>
    <ligand>
        <name>[4Fe-4S] cluster</name>
        <dbReference type="ChEBI" id="CHEBI:49883"/>
        <label>1</label>
    </ligand>
</feature>
<comment type="function">
    <text evidence="1">NDH shuttles electrons from NAD(P)H:plastoquinone, via FMN and iron-sulfur (Fe-S) centers, to quinones in the photosynthetic chain and possibly in a chloroplast respiratory chain. The immediate electron acceptor for the enzyme in this species is believed to be plastoquinone. Couples the redox reaction to proton translocation, and thus conserves the redox energy in a proton gradient.</text>
</comment>
<comment type="catalytic activity">
    <reaction evidence="1">
        <text>a plastoquinone + NADH + (n+1) H(+)(in) = a plastoquinol + NAD(+) + n H(+)(out)</text>
        <dbReference type="Rhea" id="RHEA:42608"/>
        <dbReference type="Rhea" id="RHEA-COMP:9561"/>
        <dbReference type="Rhea" id="RHEA-COMP:9562"/>
        <dbReference type="ChEBI" id="CHEBI:15378"/>
        <dbReference type="ChEBI" id="CHEBI:17757"/>
        <dbReference type="ChEBI" id="CHEBI:57540"/>
        <dbReference type="ChEBI" id="CHEBI:57945"/>
        <dbReference type="ChEBI" id="CHEBI:62192"/>
    </reaction>
</comment>
<comment type="catalytic activity">
    <reaction evidence="1">
        <text>a plastoquinone + NADPH + (n+1) H(+)(in) = a plastoquinol + NADP(+) + n H(+)(out)</text>
        <dbReference type="Rhea" id="RHEA:42612"/>
        <dbReference type="Rhea" id="RHEA-COMP:9561"/>
        <dbReference type="Rhea" id="RHEA-COMP:9562"/>
        <dbReference type="ChEBI" id="CHEBI:15378"/>
        <dbReference type="ChEBI" id="CHEBI:17757"/>
        <dbReference type="ChEBI" id="CHEBI:57783"/>
        <dbReference type="ChEBI" id="CHEBI:58349"/>
        <dbReference type="ChEBI" id="CHEBI:62192"/>
    </reaction>
</comment>
<comment type="cofactor">
    <cofactor evidence="1">
        <name>[4Fe-4S] cluster</name>
        <dbReference type="ChEBI" id="CHEBI:49883"/>
    </cofactor>
    <text evidence="1">Binds 2 [4Fe-4S] clusters per subunit.</text>
</comment>
<comment type="subunit">
    <text evidence="1">NDH is composed of at least 16 different subunits, 5 of which are encoded in the nucleus.</text>
</comment>
<comment type="subcellular location">
    <subcellularLocation>
        <location evidence="1">Plastid</location>
        <location evidence="1">Chloroplast thylakoid membrane</location>
        <topology evidence="1">Peripheral membrane protein</topology>
    </subcellularLocation>
</comment>
<comment type="similarity">
    <text evidence="1">Belongs to the complex I 23 kDa subunit family.</text>
</comment>
<name>NDHI_ICHTE</name>
<proteinExistence type="inferred from homology"/>
<reference key="1">
    <citation type="submission" date="2003-01" db="EMBL/GenBank/DDBJ databases">
        <title>Chloroplast DNA phylogeny of tribe Heliantheae (Asteraceae).</title>
        <authorList>
            <person name="Panero J.L."/>
            <person name="Baldwin B.G."/>
            <person name="Schilling E.E."/>
            <person name="Clevinger J.A."/>
        </authorList>
    </citation>
    <scope>NUCLEOTIDE SEQUENCE [GENOMIC DNA]</scope>
</reference>
<evidence type="ECO:0000255" key="1">
    <source>
        <dbReference type="HAMAP-Rule" id="MF_01351"/>
    </source>
</evidence>